<keyword id="KW-1185">Reference proteome</keyword>
<organism>
    <name type="scientific">Homo sapiens</name>
    <name type="common">Human</name>
    <dbReference type="NCBI Taxonomy" id="9606"/>
    <lineage>
        <taxon>Eukaryota</taxon>
        <taxon>Metazoa</taxon>
        <taxon>Chordata</taxon>
        <taxon>Craniata</taxon>
        <taxon>Vertebrata</taxon>
        <taxon>Euteleostomi</taxon>
        <taxon>Mammalia</taxon>
        <taxon>Eutheria</taxon>
        <taxon>Euarchontoglires</taxon>
        <taxon>Primates</taxon>
        <taxon>Haplorrhini</taxon>
        <taxon>Catarrhini</taxon>
        <taxon>Hominidae</taxon>
        <taxon>Homo</taxon>
    </lineage>
</organism>
<name>CJ055_HUMAN</name>
<protein>
    <recommendedName>
        <fullName>Uncharacterized protein C10orf55</fullName>
    </recommendedName>
</protein>
<accession>Q5SWW7</accession>
<accession>Q3KRG4</accession>
<accession>Q8NAK4</accession>
<feature type="chain" id="PRO_0000089795" description="Uncharacterized protein C10orf55">
    <location>
        <begin position="1"/>
        <end position="151"/>
    </location>
</feature>
<comment type="interaction">
    <interactant intactId="EBI-12809220">
        <id>Q5SWW7</id>
    </interactant>
    <interactant intactId="EBI-930964">
        <id>P54253</id>
        <label>ATXN1</label>
    </interactant>
    <organismsDiffer>false</organismsDiffer>
    <experiments>3</experiments>
</comment>
<comment type="interaction">
    <interactant intactId="EBI-12809220">
        <id>Q5SWW7</id>
    </interactant>
    <interactant intactId="EBI-12006120">
        <id>A0A087WZT3</id>
        <label>BOLA2-SMG1P6</label>
    </interactant>
    <organismsDiffer>false</organismsDiffer>
    <experiments>3</experiments>
</comment>
<comment type="interaction">
    <interactant intactId="EBI-12809220">
        <id>Q5SWW7</id>
    </interactant>
    <interactant intactId="EBI-12809220">
        <id>Q5SWW7</id>
        <label>C10orf55</label>
    </interactant>
    <organismsDiffer>false</organismsDiffer>
    <experiments>3</experiments>
</comment>
<comment type="interaction">
    <interactant intactId="EBI-12809220">
        <id>Q5SWW7</id>
    </interactant>
    <interactant intactId="EBI-750444">
        <id>P53672</id>
        <label>CRYBA2</label>
    </interactant>
    <organismsDiffer>false</organismsDiffer>
    <experiments>3</experiments>
</comment>
<comment type="interaction">
    <interactant intactId="EBI-12809220">
        <id>Q5SWW7</id>
    </interactant>
    <interactant intactId="EBI-740376">
        <id>Q86UW9</id>
        <label>DTX2</label>
    </interactant>
    <organismsDiffer>false</organismsDiffer>
    <experiments>3</experiments>
</comment>
<comment type="interaction">
    <interactant intactId="EBI-12809220">
        <id>Q5SWW7</id>
    </interactant>
    <interactant intactId="EBI-2370770">
        <id>Q92889</id>
        <label>ERCC4</label>
    </interactant>
    <organismsDiffer>false</organismsDiffer>
    <experiments>2</experiments>
</comment>
<comment type="interaction">
    <interactant intactId="EBI-12809220">
        <id>Q5SWW7</id>
    </interactant>
    <interactant intactId="EBI-11978259">
        <id>Q92567-2</id>
        <label>FAM168A</label>
    </interactant>
    <organismsDiffer>false</organismsDiffer>
    <experiments>3</experiments>
</comment>
<comment type="interaction">
    <interactant intactId="EBI-12809220">
        <id>Q5SWW7</id>
    </interactant>
    <interactant intactId="EBI-2807642">
        <id>Q8WU58</id>
        <label>FAM222B</label>
    </interactant>
    <organismsDiffer>false</organismsDiffer>
    <experiments>3</experiments>
</comment>
<comment type="interaction">
    <interactant intactId="EBI-12809220">
        <id>Q5SWW7</id>
    </interactant>
    <interactant intactId="EBI-10242151">
        <id>Q53EP0-3</id>
        <label>FNDC3B</label>
    </interactant>
    <organismsDiffer>false</organismsDiffer>
    <experiments>3</experiments>
</comment>
<comment type="interaction">
    <interactant intactId="EBI-12809220">
        <id>Q5SWW7</id>
    </interactant>
    <interactant intactId="EBI-1759806">
        <id>O75593</id>
        <label>FOXH1</label>
    </interactant>
    <organismsDiffer>false</organismsDiffer>
    <experiments>3</experiments>
</comment>
<comment type="interaction">
    <interactant intactId="EBI-12809220">
        <id>Q5SWW7</id>
    </interactant>
    <interactant intactId="EBI-947242">
        <id>P28676</id>
        <label>GCA</label>
    </interactant>
    <organismsDiffer>false</organismsDiffer>
    <experiments>3</experiments>
</comment>
<comment type="interaction">
    <interactant intactId="EBI-12809220">
        <id>Q5SWW7</id>
    </interactant>
    <interactant intactId="EBI-2798841">
        <id>P35680</id>
        <label>HNF1B</label>
    </interactant>
    <organismsDiffer>false</organismsDiffer>
    <experiments>3</experiments>
</comment>
<comment type="interaction">
    <interactant intactId="EBI-12809220">
        <id>Q5SWW7</id>
    </interactant>
    <interactant intactId="EBI-352986">
        <id>P52597</id>
        <label>HNRNPF</label>
    </interactant>
    <organismsDiffer>false</organismsDiffer>
    <experiments>3</experiments>
</comment>
<comment type="interaction">
    <interactant intactId="EBI-12809220">
        <id>Q5SWW7</id>
    </interactant>
    <interactant intactId="EBI-12056251">
        <id>Q9ULV5-2</id>
        <label>HSF4</label>
    </interactant>
    <organismsDiffer>false</organismsDiffer>
    <experiments>3</experiments>
</comment>
<comment type="interaction">
    <interactant intactId="EBI-12809220">
        <id>Q5SWW7</id>
    </interactant>
    <interactant intactId="EBI-6509505">
        <id>Q0VD86</id>
        <label>INCA1</label>
    </interactant>
    <organismsDiffer>false</organismsDiffer>
    <experiments>3</experiments>
</comment>
<comment type="interaction">
    <interactant intactId="EBI-12809220">
        <id>Q5SWW7</id>
    </interactant>
    <interactant intactId="EBI-11992140">
        <id>Q3LI76</id>
        <label>KRTAP15-1</label>
    </interactant>
    <organismsDiffer>false</organismsDiffer>
    <experiments>3</experiments>
</comment>
<comment type="interaction">
    <interactant intactId="EBI-12809220">
        <id>Q5SWW7</id>
    </interactant>
    <interactant intactId="EBI-11962084">
        <id>Q3LI66</id>
        <label>KRTAP6-2</label>
    </interactant>
    <organismsDiffer>false</organismsDiffer>
    <experiments>3</experiments>
</comment>
<comment type="interaction">
    <interactant intactId="EBI-12809220">
        <id>Q5SWW7</id>
    </interactant>
    <interactant intactId="EBI-739546">
        <id>Q96PV6</id>
        <label>LENG8</label>
    </interactant>
    <organismsDiffer>false</organismsDiffer>
    <experiments>3</experiments>
</comment>
<comment type="interaction">
    <interactant intactId="EBI-12809220">
        <id>Q5SWW7</id>
    </interactant>
    <interactant intactId="EBI-10196832">
        <id>P0CW20</id>
        <label>LIMS4</label>
    </interactant>
    <organismsDiffer>false</organismsDiffer>
    <experiments>3</experiments>
</comment>
<comment type="interaction">
    <interactant intactId="EBI-12809220">
        <id>Q5SWW7</id>
    </interactant>
    <interactant intactId="EBI-5662487">
        <id>Q8TDC0</id>
        <label>MYOZ3</label>
    </interactant>
    <organismsDiffer>false</organismsDiffer>
    <experiments>3</experiments>
</comment>
<comment type="interaction">
    <interactant intactId="EBI-12809220">
        <id>Q5SWW7</id>
    </interactant>
    <interactant intactId="EBI-11742836">
        <id>Q16656-4</id>
        <label>NRF1</label>
    </interactant>
    <organismsDiffer>false</organismsDiffer>
    <experiments>3</experiments>
</comment>
<comment type="interaction">
    <interactant intactId="EBI-12809220">
        <id>Q5SWW7</id>
    </interactant>
    <interactant intactId="EBI-398874">
        <id>Q9UBU9</id>
        <label>NXF1</label>
    </interactant>
    <organismsDiffer>false</organismsDiffer>
    <experiments>3</experiments>
</comment>
<comment type="interaction">
    <interactant intactId="EBI-12809220">
        <id>Q5SWW7</id>
    </interactant>
    <interactant intactId="EBI-740446">
        <id>P32242</id>
        <label>OTX1</label>
    </interactant>
    <organismsDiffer>false</organismsDiffer>
    <experiments>3</experiments>
</comment>
<comment type="interaction">
    <interactant intactId="EBI-12809220">
        <id>Q5SWW7</id>
    </interactant>
    <interactant intactId="EBI-357275">
        <id>Q99471</id>
        <label>PFDN5</label>
    </interactant>
    <organismsDiffer>false</organismsDiffer>
    <experiments>3</experiments>
</comment>
<comment type="interaction">
    <interactant intactId="EBI-12809220">
        <id>Q5SWW7</id>
    </interactant>
    <interactant intactId="EBI-748265">
        <id>P78337</id>
        <label>PITX1</label>
    </interactant>
    <organismsDiffer>false</organismsDiffer>
    <experiments>3</experiments>
</comment>
<comment type="interaction">
    <interactant intactId="EBI-12809220">
        <id>Q5SWW7</id>
    </interactant>
    <interactant intactId="EBI-12832742">
        <id>Q9UF11-2</id>
        <label>PLEKHB1</label>
    </interactant>
    <organismsDiffer>false</organismsDiffer>
    <experiments>4</experiments>
</comment>
<comment type="interaction">
    <interactant intactId="EBI-12809220">
        <id>Q5SWW7</id>
    </interactant>
    <interactant intactId="EBI-750734">
        <id>Q9NRY6</id>
        <label>PLSCR3</label>
    </interactant>
    <organismsDiffer>false</organismsDiffer>
    <experiments>3</experiments>
</comment>
<comment type="interaction">
    <interactant intactId="EBI-12809220">
        <id>Q5SWW7</id>
    </interactant>
    <interactant intactId="EBI-1389308">
        <id>Q7Z3K3</id>
        <label>POGZ</label>
    </interactant>
    <organismsDiffer>false</organismsDiffer>
    <experiments>5</experiments>
</comment>
<comment type="interaction">
    <interactant intactId="EBI-12809220">
        <id>Q5SWW7</id>
    </interactant>
    <interactant intactId="EBI-12754095">
        <id>P86480</id>
        <label>PRR20D</label>
    </interactant>
    <organismsDiffer>false</organismsDiffer>
    <experiments>3</experiments>
</comment>
<comment type="interaction">
    <interactant intactId="EBI-12809220">
        <id>Q5SWW7</id>
    </interactant>
    <interactant intactId="EBI-744023">
        <id>Q9BTL3</id>
        <label>RAMAC</label>
    </interactant>
    <organismsDiffer>false</organismsDiffer>
    <experiments>3</experiments>
</comment>
<comment type="interaction">
    <interactant intactId="EBI-12809220">
        <id>Q5SWW7</id>
    </interactant>
    <interactant intactId="EBI-12224445">
        <id>Q9BX46-2</id>
        <label>RBM24</label>
    </interactant>
    <organismsDiffer>false</organismsDiffer>
    <experiments>3</experiments>
</comment>
<comment type="interaction">
    <interactant intactId="EBI-12809220">
        <id>Q5SWW7</id>
    </interactant>
    <interactant intactId="EBI-2823850">
        <id>A0AV96</id>
        <label>RBM47</label>
    </interactant>
    <organismsDiffer>false</organismsDiffer>
    <experiments>3</experiments>
</comment>
<comment type="interaction">
    <interactant intactId="EBI-12809220">
        <id>Q5SWW7</id>
    </interactant>
    <interactant intactId="EBI-740343">
        <id>Q93062-3</id>
        <label>RBPMS</label>
    </interactant>
    <organismsDiffer>false</organismsDiffer>
    <experiments>3</experiments>
</comment>
<comment type="interaction">
    <interactant intactId="EBI-12809220">
        <id>Q5SWW7</id>
    </interactant>
    <interactant intactId="EBI-11987469">
        <id>Q6ZRY4</id>
        <label>RBPMS2</label>
    </interactant>
    <organismsDiffer>false</organismsDiffer>
    <experiments>3</experiments>
</comment>
<comment type="interaction">
    <interactant intactId="EBI-12809220">
        <id>Q5SWW7</id>
    </interactant>
    <interactant intactId="EBI-6422642">
        <id>Q01974</id>
        <label>ROR2</label>
    </interactant>
    <organismsDiffer>false</organismsDiffer>
    <experiments>3</experiments>
</comment>
<comment type="interaction">
    <interactant intactId="EBI-12809220">
        <id>Q5SWW7</id>
    </interactant>
    <interactant intactId="EBI-12000762">
        <id>Q7Z5V6-2</id>
        <label>SAXO4</label>
    </interactant>
    <organismsDiffer>false</organismsDiffer>
    <experiments>3</experiments>
</comment>
<comment type="interaction">
    <interactant intactId="EBI-12809220">
        <id>Q5SWW7</id>
    </interactant>
    <interactant intactId="EBI-12275818">
        <id>Q53HV7-2</id>
        <label>SMUG1</label>
    </interactant>
    <organismsDiffer>false</organismsDiffer>
    <experiments>3</experiments>
</comment>
<comment type="interaction">
    <interactant intactId="EBI-12809220">
        <id>Q5SWW7</id>
    </interactant>
    <interactant intactId="EBI-372475">
        <id>P14678-2</id>
        <label>SNRPB</label>
    </interactant>
    <organismsDiffer>false</organismsDiffer>
    <experiments>3</experiments>
</comment>
<comment type="interaction">
    <interactant intactId="EBI-12809220">
        <id>Q5SWW7</id>
    </interactant>
    <interactant intactId="EBI-12288855">
        <id>Q5JUK2</id>
        <label>SOHLH1</label>
    </interactant>
    <organismsDiffer>false</organismsDiffer>
    <experiments>3</experiments>
</comment>
<comment type="interaction">
    <interactant intactId="EBI-12809220">
        <id>Q5SWW7</id>
    </interactant>
    <interactant intactId="EBI-1167533">
        <id>P56693</id>
        <label>SOX10</label>
    </interactant>
    <organismsDiffer>false</organismsDiffer>
    <experiments>3</experiments>
</comment>
<comment type="interaction">
    <interactant intactId="EBI-12809220">
        <id>Q5SWW7</id>
    </interactant>
    <interactant intactId="EBI-2824328">
        <id>O95947</id>
        <label>TBX6</label>
    </interactant>
    <organismsDiffer>false</organismsDiffer>
    <experiments>3</experiments>
</comment>
<comment type="interaction">
    <interactant intactId="EBI-12809220">
        <id>Q5SWW7</id>
    </interactant>
    <interactant intactId="EBI-752030">
        <id>Q96A09</id>
        <label>TENT5B</label>
    </interactant>
    <organismsDiffer>false</organismsDiffer>
    <experiments>5</experiments>
</comment>
<comment type="interaction">
    <interactant intactId="EBI-12809220">
        <id>Q5SWW7</id>
    </interactant>
    <interactant intactId="EBI-744726">
        <id>Q8NEK8</id>
        <label>TENT5D</label>
    </interactant>
    <organismsDiffer>false</organismsDiffer>
    <experiments>3</experiments>
</comment>
<comment type="interaction">
    <interactant intactId="EBI-12809220">
        <id>Q5SWW7</id>
    </interactant>
    <interactant intactId="EBI-11064654">
        <id>Q01085-2</id>
        <label>TIAL1</label>
    </interactant>
    <organismsDiffer>false</organismsDiffer>
    <experiments>3</experiments>
</comment>
<comment type="interaction">
    <interactant intactId="EBI-12809220">
        <id>Q5SWW7</id>
    </interactant>
    <interactant intactId="EBI-11741437">
        <id>Q08117-2</id>
        <label>TLE5</label>
    </interactant>
    <organismsDiffer>false</organismsDiffer>
    <experiments>3</experiments>
</comment>
<comment type="interaction">
    <interactant intactId="EBI-12809220">
        <id>Q5SWW7</id>
    </interactant>
    <interactant intactId="EBI-396540">
        <id>Q12888</id>
        <label>TP53BP1</label>
    </interactant>
    <organismsDiffer>false</organismsDiffer>
    <experiments>3</experiments>
</comment>
<comment type="interaction">
    <interactant intactId="EBI-12809220">
        <id>Q5SWW7</id>
    </interactant>
    <interactant intactId="EBI-2514383">
        <id>Q5T6F2</id>
        <label>UBAP2</label>
    </interactant>
    <organismsDiffer>false</organismsDiffer>
    <experiments>3</experiments>
</comment>
<comment type="interaction">
    <interactant intactId="EBI-12809220">
        <id>Q5SWW7</id>
    </interactant>
    <interactant intactId="EBI-12068150">
        <id>Q6NVU6</id>
        <label>UFSP1</label>
    </interactant>
    <organismsDiffer>false</organismsDiffer>
    <experiments>3</experiments>
</comment>
<comment type="interaction">
    <interactant intactId="EBI-12809220">
        <id>Q5SWW7</id>
    </interactant>
    <interactant intactId="EBI-10191303">
        <id>O95231</id>
        <label>VENTX</label>
    </interactant>
    <organismsDiffer>false</organismsDiffer>
    <experiments>3</experiments>
</comment>
<comment type="interaction">
    <interactant intactId="EBI-12809220">
        <id>Q5SWW7</id>
    </interactant>
    <interactant intactId="EBI-11980193">
        <id>Q14119</id>
        <label>VEZF1</label>
    </interactant>
    <organismsDiffer>false</organismsDiffer>
    <experiments>5</experiments>
</comment>
<comment type="interaction">
    <interactant intactId="EBI-12809220">
        <id>Q5SWW7</id>
    </interactant>
    <interactant intactId="EBI-12040603">
        <id>Q9NZC7-5</id>
        <label>WWOX</label>
    </interactant>
    <organismsDiffer>false</organismsDiffer>
    <experiments>3</experiments>
</comment>
<comment type="interaction">
    <interactant intactId="EBI-12809220">
        <id>Q5SWW7</id>
    </interactant>
    <interactant intactId="EBI-742550">
        <id>Q96K80</id>
        <label>ZC3H10</label>
    </interactant>
    <organismsDiffer>false</organismsDiffer>
    <experiments>3</experiments>
</comment>
<comment type="interaction">
    <interactant intactId="EBI-12809220">
        <id>Q5SWW7</id>
    </interactant>
    <interactant intactId="EBI-7254550">
        <id>P36508</id>
        <label>ZNF76</label>
    </interactant>
    <organismsDiffer>false</organismsDiffer>
    <experiments>3</experiments>
</comment>
<comment type="sequence caution" evidence="1">
    <conflict type="erroneous initiation">
        <sequence resource="EMBL-CDS" id="BAC03908"/>
    </conflict>
</comment>
<sequence>MFLHLDSHSSLERTKPTVVGVDTHMELDEVHCCPGRDSGGGFIKGPMLQGLQGEGKLAPIPKPTLPSPSRLTLFVSSSQMEDHGFPARRNGLTQASFIYQMPAGWGSPGGLFLPCQPVPTPVVLKPPLPPCPISWGESGPAVDGIRRTPAP</sequence>
<reference key="1">
    <citation type="journal article" date="2004" name="Nature">
        <title>The DNA sequence and comparative analysis of human chromosome 10.</title>
        <authorList>
            <person name="Deloukas P."/>
            <person name="Earthrowl M.E."/>
            <person name="Grafham D.V."/>
            <person name="Rubenfield M."/>
            <person name="French L."/>
            <person name="Steward C.A."/>
            <person name="Sims S.K."/>
            <person name="Jones M.C."/>
            <person name="Searle S."/>
            <person name="Scott C."/>
            <person name="Howe K."/>
            <person name="Hunt S.E."/>
            <person name="Andrews T.D."/>
            <person name="Gilbert J.G.R."/>
            <person name="Swarbreck D."/>
            <person name="Ashurst J.L."/>
            <person name="Taylor A."/>
            <person name="Battles J."/>
            <person name="Bird C.P."/>
            <person name="Ainscough R."/>
            <person name="Almeida J.P."/>
            <person name="Ashwell R.I.S."/>
            <person name="Ambrose K.D."/>
            <person name="Babbage A.K."/>
            <person name="Bagguley C.L."/>
            <person name="Bailey J."/>
            <person name="Banerjee R."/>
            <person name="Bates K."/>
            <person name="Beasley H."/>
            <person name="Bray-Allen S."/>
            <person name="Brown A.J."/>
            <person name="Brown J.Y."/>
            <person name="Burford D.C."/>
            <person name="Burrill W."/>
            <person name="Burton J."/>
            <person name="Cahill P."/>
            <person name="Camire D."/>
            <person name="Carter N.P."/>
            <person name="Chapman J.C."/>
            <person name="Clark S.Y."/>
            <person name="Clarke G."/>
            <person name="Clee C.M."/>
            <person name="Clegg S."/>
            <person name="Corby N."/>
            <person name="Coulson A."/>
            <person name="Dhami P."/>
            <person name="Dutta I."/>
            <person name="Dunn M."/>
            <person name="Faulkner L."/>
            <person name="Frankish A."/>
            <person name="Frankland J.A."/>
            <person name="Garner P."/>
            <person name="Garnett J."/>
            <person name="Gribble S."/>
            <person name="Griffiths C."/>
            <person name="Grocock R."/>
            <person name="Gustafson E."/>
            <person name="Hammond S."/>
            <person name="Harley J.L."/>
            <person name="Hart E."/>
            <person name="Heath P.D."/>
            <person name="Ho T.P."/>
            <person name="Hopkins B."/>
            <person name="Horne J."/>
            <person name="Howden P.J."/>
            <person name="Huckle E."/>
            <person name="Hynds C."/>
            <person name="Johnson C."/>
            <person name="Johnson D."/>
            <person name="Kana A."/>
            <person name="Kay M."/>
            <person name="Kimberley A.M."/>
            <person name="Kershaw J.K."/>
            <person name="Kokkinaki M."/>
            <person name="Laird G.K."/>
            <person name="Lawlor S."/>
            <person name="Lee H.M."/>
            <person name="Leongamornlert D.A."/>
            <person name="Laird G."/>
            <person name="Lloyd C."/>
            <person name="Lloyd D.M."/>
            <person name="Loveland J."/>
            <person name="Lovell J."/>
            <person name="McLaren S."/>
            <person name="McLay K.E."/>
            <person name="McMurray A."/>
            <person name="Mashreghi-Mohammadi M."/>
            <person name="Matthews L."/>
            <person name="Milne S."/>
            <person name="Nickerson T."/>
            <person name="Nguyen M."/>
            <person name="Overton-Larty E."/>
            <person name="Palmer S.A."/>
            <person name="Pearce A.V."/>
            <person name="Peck A.I."/>
            <person name="Pelan S."/>
            <person name="Phillimore B."/>
            <person name="Porter K."/>
            <person name="Rice C.M."/>
            <person name="Rogosin A."/>
            <person name="Ross M.T."/>
            <person name="Sarafidou T."/>
            <person name="Sehra H.K."/>
            <person name="Shownkeen R."/>
            <person name="Skuce C.D."/>
            <person name="Smith M."/>
            <person name="Standring L."/>
            <person name="Sycamore N."/>
            <person name="Tester J."/>
            <person name="Thorpe A."/>
            <person name="Torcasso W."/>
            <person name="Tracey A."/>
            <person name="Tromans A."/>
            <person name="Tsolas J."/>
            <person name="Wall M."/>
            <person name="Walsh J."/>
            <person name="Wang H."/>
            <person name="Weinstock K."/>
            <person name="West A.P."/>
            <person name="Willey D.L."/>
            <person name="Whitehead S.L."/>
            <person name="Wilming L."/>
            <person name="Wray P.W."/>
            <person name="Young L."/>
            <person name="Chen Y."/>
            <person name="Lovering R.C."/>
            <person name="Moschonas N.K."/>
            <person name="Siebert R."/>
            <person name="Fechtel K."/>
            <person name="Bentley D."/>
            <person name="Durbin R.M."/>
            <person name="Hubbard T."/>
            <person name="Doucette-Stamm L."/>
            <person name="Beck S."/>
            <person name="Smith D.R."/>
            <person name="Rogers J."/>
        </authorList>
    </citation>
    <scope>NUCLEOTIDE SEQUENCE [LARGE SCALE GENOMIC DNA]</scope>
</reference>
<reference key="2">
    <citation type="journal article" date="2004" name="Genome Res.">
        <title>The status, quality, and expansion of the NIH full-length cDNA project: the Mammalian Gene Collection (MGC).</title>
        <authorList>
            <consortium name="The MGC Project Team"/>
        </authorList>
    </citation>
    <scope>NUCLEOTIDE SEQUENCE [LARGE SCALE MRNA]</scope>
    <source>
        <tissue>Testis</tissue>
    </source>
</reference>
<reference key="3">
    <citation type="journal article" date="2004" name="Nat. Genet.">
        <title>Complete sequencing and characterization of 21,243 full-length human cDNAs.</title>
        <authorList>
            <person name="Ota T."/>
            <person name="Suzuki Y."/>
            <person name="Nishikawa T."/>
            <person name="Otsuki T."/>
            <person name="Sugiyama T."/>
            <person name="Irie R."/>
            <person name="Wakamatsu A."/>
            <person name="Hayashi K."/>
            <person name="Sato H."/>
            <person name="Nagai K."/>
            <person name="Kimura K."/>
            <person name="Makita H."/>
            <person name="Sekine M."/>
            <person name="Obayashi M."/>
            <person name="Nishi T."/>
            <person name="Shibahara T."/>
            <person name="Tanaka T."/>
            <person name="Ishii S."/>
            <person name="Yamamoto J."/>
            <person name="Saito K."/>
            <person name="Kawai Y."/>
            <person name="Isono Y."/>
            <person name="Nakamura Y."/>
            <person name="Nagahari K."/>
            <person name="Murakami K."/>
            <person name="Yasuda T."/>
            <person name="Iwayanagi T."/>
            <person name="Wagatsuma M."/>
            <person name="Shiratori A."/>
            <person name="Sudo H."/>
            <person name="Hosoiri T."/>
            <person name="Kaku Y."/>
            <person name="Kodaira H."/>
            <person name="Kondo H."/>
            <person name="Sugawara M."/>
            <person name="Takahashi M."/>
            <person name="Kanda K."/>
            <person name="Yokoi T."/>
            <person name="Furuya T."/>
            <person name="Kikkawa E."/>
            <person name="Omura Y."/>
            <person name="Abe K."/>
            <person name="Kamihara K."/>
            <person name="Katsuta N."/>
            <person name="Sato K."/>
            <person name="Tanikawa M."/>
            <person name="Yamazaki M."/>
            <person name="Ninomiya K."/>
            <person name="Ishibashi T."/>
            <person name="Yamashita H."/>
            <person name="Murakawa K."/>
            <person name="Fujimori K."/>
            <person name="Tanai H."/>
            <person name="Kimata M."/>
            <person name="Watanabe M."/>
            <person name="Hiraoka S."/>
            <person name="Chiba Y."/>
            <person name="Ishida S."/>
            <person name="Ono Y."/>
            <person name="Takiguchi S."/>
            <person name="Watanabe S."/>
            <person name="Yosida M."/>
            <person name="Hotuta T."/>
            <person name="Kusano J."/>
            <person name="Kanehori K."/>
            <person name="Takahashi-Fujii A."/>
            <person name="Hara H."/>
            <person name="Tanase T.-O."/>
            <person name="Nomura Y."/>
            <person name="Togiya S."/>
            <person name="Komai F."/>
            <person name="Hara R."/>
            <person name="Takeuchi K."/>
            <person name="Arita M."/>
            <person name="Imose N."/>
            <person name="Musashino K."/>
            <person name="Yuuki H."/>
            <person name="Oshima A."/>
            <person name="Sasaki N."/>
            <person name="Aotsuka S."/>
            <person name="Yoshikawa Y."/>
            <person name="Matsunawa H."/>
            <person name="Ichihara T."/>
            <person name="Shiohata N."/>
            <person name="Sano S."/>
            <person name="Moriya S."/>
            <person name="Momiyama H."/>
            <person name="Satoh N."/>
            <person name="Takami S."/>
            <person name="Terashima Y."/>
            <person name="Suzuki O."/>
            <person name="Nakagawa S."/>
            <person name="Senoh A."/>
            <person name="Mizoguchi H."/>
            <person name="Goto Y."/>
            <person name="Shimizu F."/>
            <person name="Wakebe H."/>
            <person name="Hishigaki H."/>
            <person name="Watanabe T."/>
            <person name="Sugiyama A."/>
            <person name="Takemoto M."/>
            <person name="Kawakami B."/>
            <person name="Yamazaki M."/>
            <person name="Watanabe K."/>
            <person name="Kumagai A."/>
            <person name="Itakura S."/>
            <person name="Fukuzumi Y."/>
            <person name="Fujimori Y."/>
            <person name="Komiyama M."/>
            <person name="Tashiro H."/>
            <person name="Tanigami A."/>
            <person name="Fujiwara T."/>
            <person name="Ono T."/>
            <person name="Yamada K."/>
            <person name="Fujii Y."/>
            <person name="Ozaki K."/>
            <person name="Hirao M."/>
            <person name="Ohmori Y."/>
            <person name="Kawabata A."/>
            <person name="Hikiji T."/>
            <person name="Kobatake N."/>
            <person name="Inagaki H."/>
            <person name="Ikema Y."/>
            <person name="Okamoto S."/>
            <person name="Okitani R."/>
            <person name="Kawakami T."/>
            <person name="Noguchi S."/>
            <person name="Itoh T."/>
            <person name="Shigeta K."/>
            <person name="Senba T."/>
            <person name="Matsumura K."/>
            <person name="Nakajima Y."/>
            <person name="Mizuno T."/>
            <person name="Morinaga M."/>
            <person name="Sasaki M."/>
            <person name="Togashi T."/>
            <person name="Oyama M."/>
            <person name="Hata H."/>
            <person name="Watanabe M."/>
            <person name="Komatsu T."/>
            <person name="Mizushima-Sugano J."/>
            <person name="Satoh T."/>
            <person name="Shirai Y."/>
            <person name="Takahashi Y."/>
            <person name="Nakagawa K."/>
            <person name="Okumura K."/>
            <person name="Nagase T."/>
            <person name="Nomura N."/>
            <person name="Kikuchi H."/>
            <person name="Masuho Y."/>
            <person name="Yamashita R."/>
            <person name="Nakai K."/>
            <person name="Yada T."/>
            <person name="Nakamura Y."/>
            <person name="Ohara O."/>
            <person name="Isogai T."/>
            <person name="Sugano S."/>
        </authorList>
    </citation>
    <scope>NUCLEOTIDE SEQUENCE [LARGE SCALE MRNA] OF 6-151</scope>
    <source>
        <tissue>Placenta</tissue>
    </source>
</reference>
<evidence type="ECO:0000305" key="1"/>
<proteinExistence type="evidence at protein level"/>
<gene>
    <name type="primary">C10orf55</name>
</gene>
<dbReference type="EMBL" id="AL596247">
    <property type="status" value="NOT_ANNOTATED_CDS"/>
    <property type="molecule type" value="Genomic_DNA"/>
</dbReference>
<dbReference type="EMBL" id="BC049374">
    <property type="protein sequence ID" value="AAH49374.1"/>
    <property type="molecule type" value="mRNA"/>
</dbReference>
<dbReference type="EMBL" id="AK092517">
    <property type="protein sequence ID" value="BAC03908.1"/>
    <property type="status" value="ALT_INIT"/>
    <property type="molecule type" value="mRNA"/>
</dbReference>
<dbReference type="RefSeq" id="NP_001001791.2">
    <property type="nucleotide sequence ID" value="NM_001001791.2"/>
</dbReference>
<dbReference type="BioGRID" id="136015">
    <property type="interactions" value="73"/>
</dbReference>
<dbReference type="IntAct" id="Q5SWW7">
    <property type="interactions" value="53"/>
</dbReference>
<dbReference type="STRING" id="9606.ENSP00000409225"/>
<dbReference type="GlyGen" id="Q5SWW7">
    <property type="glycosylation" value="2 sites, 1 O-linked glycan (1 site)"/>
</dbReference>
<dbReference type="iPTMnet" id="Q5SWW7"/>
<dbReference type="BioMuta" id="C10orf55"/>
<dbReference type="jPOST" id="Q5SWW7"/>
<dbReference type="MassIVE" id="Q5SWW7"/>
<dbReference type="PaxDb" id="9606-ENSP00000409225"/>
<dbReference type="UCSC" id="uc057ueo.1">
    <property type="organism name" value="human"/>
</dbReference>
<dbReference type="AGR" id="HGNC:31008"/>
<dbReference type="GeneCards" id="C10orf55"/>
<dbReference type="HGNC" id="HGNC:31008">
    <property type="gene designation" value="C10orf55"/>
</dbReference>
<dbReference type="MalaCards" id="C10orf55"/>
<dbReference type="neXtProt" id="NX_Q5SWW7"/>
<dbReference type="PharmGKB" id="PA134866694"/>
<dbReference type="eggNOG" id="ENOG502RKN2">
    <property type="taxonomic scope" value="Eukaryota"/>
</dbReference>
<dbReference type="HOGENOM" id="CLU_1730802_0_0_1"/>
<dbReference type="InParanoid" id="Q5SWW7"/>
<dbReference type="PAN-GO" id="Q5SWW7">
    <property type="GO annotations" value="0 GO annotations based on evolutionary models"/>
</dbReference>
<dbReference type="PhylomeDB" id="Q5SWW7"/>
<dbReference type="TreeFam" id="TF340698"/>
<dbReference type="PathwayCommons" id="Q5SWW7"/>
<dbReference type="SignaLink" id="Q5SWW7"/>
<dbReference type="BioGRID-ORCS" id="414236">
    <property type="hits" value="15 hits in 1121 CRISPR screens"/>
</dbReference>
<dbReference type="ChiTaRS" id="C10orf55">
    <property type="organism name" value="human"/>
</dbReference>
<dbReference type="GenomeRNAi" id="414236"/>
<dbReference type="Pharos" id="Q5SWW7">
    <property type="development level" value="Tdark"/>
</dbReference>
<dbReference type="PRO" id="PR:Q5SWW7"/>
<dbReference type="Proteomes" id="UP000005640">
    <property type="component" value="Chromosome 10"/>
</dbReference>
<dbReference type="RNAct" id="Q5SWW7">
    <property type="molecule type" value="protein"/>
</dbReference>
<dbReference type="GO" id="GO:0042802">
    <property type="term" value="F:identical protein binding"/>
    <property type="evidence" value="ECO:0000353"/>
    <property type="project" value="IntAct"/>
</dbReference>